<comment type="function">
    <text evidence="1">The beta subunit is responsible for the synthesis of L-tryptophan from indole and L-serine.</text>
</comment>
<comment type="catalytic activity">
    <reaction evidence="1">
        <text>(1S,2R)-1-C-(indol-3-yl)glycerol 3-phosphate + L-serine = D-glyceraldehyde 3-phosphate + L-tryptophan + H2O</text>
        <dbReference type="Rhea" id="RHEA:10532"/>
        <dbReference type="ChEBI" id="CHEBI:15377"/>
        <dbReference type="ChEBI" id="CHEBI:33384"/>
        <dbReference type="ChEBI" id="CHEBI:57912"/>
        <dbReference type="ChEBI" id="CHEBI:58866"/>
        <dbReference type="ChEBI" id="CHEBI:59776"/>
        <dbReference type="EC" id="4.2.1.20"/>
    </reaction>
</comment>
<comment type="cofactor">
    <cofactor evidence="1">
        <name>pyridoxal 5'-phosphate</name>
        <dbReference type="ChEBI" id="CHEBI:597326"/>
    </cofactor>
</comment>
<comment type="pathway">
    <text evidence="1">Amino-acid biosynthesis; L-tryptophan biosynthesis; L-tryptophan from chorismate: step 5/5.</text>
</comment>
<comment type="subunit">
    <text evidence="1">Tetramer of two alpha and two beta chains.</text>
</comment>
<comment type="similarity">
    <text evidence="1">Belongs to the TrpB family.</text>
</comment>
<organism>
    <name type="scientific">Pseudomonas savastanoi pv. phaseolicola</name>
    <name type="common">Pseudomonas syringae pv. phaseolicola</name>
    <dbReference type="NCBI Taxonomy" id="319"/>
    <lineage>
        <taxon>Bacteria</taxon>
        <taxon>Pseudomonadati</taxon>
        <taxon>Pseudomonadota</taxon>
        <taxon>Gammaproteobacteria</taxon>
        <taxon>Pseudomonadales</taxon>
        <taxon>Pseudomonadaceae</taxon>
        <taxon>Pseudomonas</taxon>
    </lineage>
</organism>
<gene>
    <name evidence="1" type="primary">trpB</name>
</gene>
<reference key="1">
    <citation type="thesis" date="2003" institute="University of London" country="United Kingdom">
        <title>Biochemical, structural and molecular characterization of resistant interactions between Pseudomonas syringae pv. phaseolicola and Phaseolus vulgaris.</title>
        <authorList>
            <person name="Tsaltas D."/>
        </authorList>
    </citation>
    <scope>NUCLEOTIDE SEQUENCE [GENOMIC DNA]</scope>
    <source>
        <strain>1449 / Race 7</strain>
    </source>
</reference>
<protein>
    <recommendedName>
        <fullName evidence="1">Tryptophan synthase beta chain</fullName>
        <ecNumber evidence="1">4.2.1.20</ecNumber>
    </recommendedName>
</protein>
<evidence type="ECO:0000255" key="1">
    <source>
        <dbReference type="HAMAP-Rule" id="MF_00133"/>
    </source>
</evidence>
<keyword id="KW-0028">Amino-acid biosynthesis</keyword>
<keyword id="KW-0057">Aromatic amino acid biosynthesis</keyword>
<keyword id="KW-0456">Lyase</keyword>
<keyword id="KW-0663">Pyridoxal phosphate</keyword>
<keyword id="KW-0822">Tryptophan biosynthesis</keyword>
<proteinExistence type="inferred from homology"/>
<sequence>MTQTNFRSGPDVNGLFGSFGGRYVAETLMPLVLDLNREYEAAKADPEFAKEMAYFQRDYVGRPNPLYFAERLTEFCDGAKIYFKREELNHTGAHKINNCIGQVLLAKRMGKKRLIAETGAGMHGVATATVAARFGLPCVIYMGATDIERQQANVFRMKLLGAEIVPVTSGTGTLKDAMNEALRDWVTNVDDTFYLIGTVAGPHPYPAMVRDFQAIIGKETKEQMQEKEGRLPDSLIACVGGGSNAMGLFHPFLDDASVEIIGVEAGGHGVDTDKHAASLNGGVPGVLHGNRTYLLQDGDGQITDPHSISAGLDYPGIGPEHAFLHEVKRVEYVSITDDEALDAFHQCCLLEGIIPALETAHALAEAMKRATNLRDDHLMVVCLSGRGDKDMQTVMNHMAAAEKTQEKLV</sequence>
<name>TRPB_PSESH</name>
<accession>Q849P2</accession>
<feature type="chain" id="PRO_0000098984" description="Tryptophan synthase beta chain">
    <location>
        <begin position="1"/>
        <end position="409"/>
    </location>
</feature>
<feature type="modified residue" description="N6-(pyridoxal phosphate)lysine" evidence="1">
    <location>
        <position position="95"/>
    </location>
</feature>
<dbReference type="EC" id="4.2.1.20" evidence="1"/>
<dbReference type="EMBL" id="AY210847">
    <property type="protein sequence ID" value="AAO50076.1"/>
    <property type="molecule type" value="Genomic_DNA"/>
</dbReference>
<dbReference type="SMR" id="Q849P2"/>
<dbReference type="UniPathway" id="UPA00035">
    <property type="reaction ID" value="UER00044"/>
</dbReference>
<dbReference type="GO" id="GO:0005737">
    <property type="term" value="C:cytoplasm"/>
    <property type="evidence" value="ECO:0007669"/>
    <property type="project" value="TreeGrafter"/>
</dbReference>
<dbReference type="GO" id="GO:0004834">
    <property type="term" value="F:tryptophan synthase activity"/>
    <property type="evidence" value="ECO:0007669"/>
    <property type="project" value="UniProtKB-UniRule"/>
</dbReference>
<dbReference type="CDD" id="cd06446">
    <property type="entry name" value="Trp-synth_B"/>
    <property type="match status" value="1"/>
</dbReference>
<dbReference type="FunFam" id="3.40.50.1100:FF:000001">
    <property type="entry name" value="Tryptophan synthase beta chain"/>
    <property type="match status" value="1"/>
</dbReference>
<dbReference type="FunFam" id="3.40.50.1100:FF:000004">
    <property type="entry name" value="Tryptophan synthase beta chain"/>
    <property type="match status" value="1"/>
</dbReference>
<dbReference type="Gene3D" id="3.40.50.1100">
    <property type="match status" value="2"/>
</dbReference>
<dbReference type="HAMAP" id="MF_00133">
    <property type="entry name" value="Trp_synth_beta"/>
    <property type="match status" value="1"/>
</dbReference>
<dbReference type="InterPro" id="IPR006653">
    <property type="entry name" value="Trp_synth_b_CS"/>
</dbReference>
<dbReference type="InterPro" id="IPR006654">
    <property type="entry name" value="Trp_synth_beta"/>
</dbReference>
<dbReference type="InterPro" id="IPR023026">
    <property type="entry name" value="Trp_synth_beta/beta-like"/>
</dbReference>
<dbReference type="InterPro" id="IPR001926">
    <property type="entry name" value="TrpB-like_PALP"/>
</dbReference>
<dbReference type="InterPro" id="IPR036052">
    <property type="entry name" value="TrpB-like_PALP_sf"/>
</dbReference>
<dbReference type="NCBIfam" id="TIGR00263">
    <property type="entry name" value="trpB"/>
    <property type="match status" value="1"/>
</dbReference>
<dbReference type="PANTHER" id="PTHR48077:SF3">
    <property type="entry name" value="TRYPTOPHAN SYNTHASE"/>
    <property type="match status" value="1"/>
</dbReference>
<dbReference type="PANTHER" id="PTHR48077">
    <property type="entry name" value="TRYPTOPHAN SYNTHASE-RELATED"/>
    <property type="match status" value="1"/>
</dbReference>
<dbReference type="Pfam" id="PF00291">
    <property type="entry name" value="PALP"/>
    <property type="match status" value="1"/>
</dbReference>
<dbReference type="PIRSF" id="PIRSF001413">
    <property type="entry name" value="Trp_syn_beta"/>
    <property type="match status" value="1"/>
</dbReference>
<dbReference type="SUPFAM" id="SSF53686">
    <property type="entry name" value="Tryptophan synthase beta subunit-like PLP-dependent enzymes"/>
    <property type="match status" value="1"/>
</dbReference>
<dbReference type="PROSITE" id="PS00168">
    <property type="entry name" value="TRP_SYNTHASE_BETA"/>
    <property type="match status" value="1"/>
</dbReference>